<feature type="chain" id="PRO_0000225101" description="UDP-N-acetylglucosamine--N-acetylmuramyl-(pentapeptide) pyrophosphoryl-undecaprenol N-acetylglucosamine transferase">
    <location>
        <begin position="1"/>
        <end position="358"/>
    </location>
</feature>
<feature type="binding site" evidence="1">
    <location>
        <position position="197"/>
    </location>
    <ligand>
        <name>UDP-N-acetyl-alpha-D-glucosamine</name>
        <dbReference type="ChEBI" id="CHEBI:57705"/>
    </ligand>
</feature>
<feature type="binding site" evidence="1">
    <location>
        <position position="288"/>
    </location>
    <ligand>
        <name>UDP-N-acetyl-alpha-D-glucosamine</name>
        <dbReference type="ChEBI" id="CHEBI:57705"/>
    </ligand>
</feature>
<keyword id="KW-0131">Cell cycle</keyword>
<keyword id="KW-0132">Cell division</keyword>
<keyword id="KW-1003">Cell membrane</keyword>
<keyword id="KW-0133">Cell shape</keyword>
<keyword id="KW-0961">Cell wall biogenesis/degradation</keyword>
<keyword id="KW-0328">Glycosyltransferase</keyword>
<keyword id="KW-0472">Membrane</keyword>
<keyword id="KW-0573">Peptidoglycan synthesis</keyword>
<keyword id="KW-1185">Reference proteome</keyword>
<keyword id="KW-0808">Transferase</keyword>
<comment type="function">
    <text evidence="1">Cell wall formation. Catalyzes the transfer of a GlcNAc subunit on undecaprenyl-pyrophosphoryl-MurNAc-pentapeptide (lipid intermediate I) to form undecaprenyl-pyrophosphoryl-MurNAc-(pentapeptide)GlcNAc (lipid intermediate II).</text>
</comment>
<comment type="catalytic activity">
    <reaction evidence="1">
        <text>Mur2Ac(oyl-L-Ala-gamma-D-Glu-L-Lys-D-Ala-D-Ala)-di-trans,octa-cis-undecaprenyl diphosphate + UDP-N-acetyl-alpha-D-glucosamine = beta-D-GlcNAc-(1-&gt;4)-Mur2Ac(oyl-L-Ala-gamma-D-Glu-L-Lys-D-Ala-D-Ala)-di-trans,octa-cis-undecaprenyl diphosphate + UDP + H(+)</text>
        <dbReference type="Rhea" id="RHEA:23192"/>
        <dbReference type="ChEBI" id="CHEBI:15378"/>
        <dbReference type="ChEBI" id="CHEBI:57705"/>
        <dbReference type="ChEBI" id="CHEBI:58223"/>
        <dbReference type="ChEBI" id="CHEBI:60032"/>
        <dbReference type="ChEBI" id="CHEBI:60033"/>
        <dbReference type="EC" id="2.4.1.227"/>
    </reaction>
</comment>
<comment type="pathway">
    <text evidence="1">Cell wall biogenesis; peptidoglycan biosynthesis.</text>
</comment>
<comment type="subcellular location">
    <subcellularLocation>
        <location evidence="1">Cell membrane</location>
        <topology evidence="1">Peripheral membrane protein</topology>
        <orientation evidence="1">Cytoplasmic side</orientation>
    </subcellularLocation>
</comment>
<comment type="similarity">
    <text evidence="1">Belongs to the glycosyltransferase 28 family. MurG subfamily.</text>
</comment>
<reference key="1">
    <citation type="journal article" date="2002" name="Proc. Natl. Acad. Sci. U.S.A.">
        <title>Complete genome sequence and comparative genomic analysis of an emerging human pathogen, serotype V Streptococcus agalactiae.</title>
        <authorList>
            <person name="Tettelin H."/>
            <person name="Masignani V."/>
            <person name="Cieslewicz M.J."/>
            <person name="Eisen J.A."/>
            <person name="Peterson S.N."/>
            <person name="Wessels M.R."/>
            <person name="Paulsen I.T."/>
            <person name="Nelson K.E."/>
            <person name="Margarit I."/>
            <person name="Read T.D."/>
            <person name="Madoff L.C."/>
            <person name="Wolf A.M."/>
            <person name="Beanan M.J."/>
            <person name="Brinkac L.M."/>
            <person name="Daugherty S.C."/>
            <person name="DeBoy R.T."/>
            <person name="Durkin A.S."/>
            <person name="Kolonay J.F."/>
            <person name="Madupu R."/>
            <person name="Lewis M.R."/>
            <person name="Radune D."/>
            <person name="Fedorova N.B."/>
            <person name="Scanlan D."/>
            <person name="Khouri H.M."/>
            <person name="Mulligan S."/>
            <person name="Carty H.A."/>
            <person name="Cline R.T."/>
            <person name="Van Aken S.E."/>
            <person name="Gill J."/>
            <person name="Scarselli M."/>
            <person name="Mora M."/>
            <person name="Iacobini E.T."/>
            <person name="Brettoni C."/>
            <person name="Galli G."/>
            <person name="Mariani M."/>
            <person name="Vegni F."/>
            <person name="Maione D."/>
            <person name="Rinaudo D."/>
            <person name="Rappuoli R."/>
            <person name="Telford J.L."/>
            <person name="Kasper D.L."/>
            <person name="Grandi G."/>
            <person name="Fraser C.M."/>
        </authorList>
    </citation>
    <scope>NUCLEOTIDE SEQUENCE [LARGE SCALE GENOMIC DNA]</scope>
    <source>
        <strain>ATCC BAA-611 / 2603 V/R</strain>
    </source>
</reference>
<evidence type="ECO:0000255" key="1">
    <source>
        <dbReference type="HAMAP-Rule" id="MF_00033"/>
    </source>
</evidence>
<name>MURG_STRA5</name>
<protein>
    <recommendedName>
        <fullName evidence="1">UDP-N-acetylglucosamine--N-acetylmuramyl-(pentapeptide) pyrophosphoryl-undecaprenol N-acetylglucosamine transferase</fullName>
        <ecNumber evidence="1">2.4.1.227</ecNumber>
    </recommendedName>
    <alternativeName>
        <fullName evidence="1">Undecaprenyl-PP-MurNAc-pentapeptide-UDPGlcNAc GlcNAc transferase</fullName>
    </alternativeName>
</protein>
<proteinExistence type="inferred from homology"/>
<dbReference type="EC" id="2.4.1.227" evidence="1"/>
<dbReference type="EMBL" id="AE009948">
    <property type="protein sequence ID" value="AAM99378.1"/>
    <property type="molecule type" value="Genomic_DNA"/>
</dbReference>
<dbReference type="RefSeq" id="NP_687506.1">
    <property type="nucleotide sequence ID" value="NC_004116.1"/>
</dbReference>
<dbReference type="RefSeq" id="WP_000516700.1">
    <property type="nucleotide sequence ID" value="NC_004116.1"/>
</dbReference>
<dbReference type="SMR" id="Q8CX15"/>
<dbReference type="STRING" id="208435.SAG0476"/>
<dbReference type="CAZy" id="GT28">
    <property type="family name" value="Glycosyltransferase Family 28"/>
</dbReference>
<dbReference type="KEGG" id="sag:SAG0476"/>
<dbReference type="PATRIC" id="fig|208435.3.peg.474"/>
<dbReference type="HOGENOM" id="CLU_037404_0_0_9"/>
<dbReference type="OrthoDB" id="9808936at2"/>
<dbReference type="UniPathway" id="UPA00219"/>
<dbReference type="Proteomes" id="UP000000821">
    <property type="component" value="Chromosome"/>
</dbReference>
<dbReference type="GO" id="GO:0005886">
    <property type="term" value="C:plasma membrane"/>
    <property type="evidence" value="ECO:0007669"/>
    <property type="project" value="UniProtKB-SubCell"/>
</dbReference>
<dbReference type="GO" id="GO:0050511">
    <property type="term" value="F:undecaprenyldiphospho-muramoylpentapeptide beta-N-acetylglucosaminyltransferase activity"/>
    <property type="evidence" value="ECO:0007669"/>
    <property type="project" value="UniProtKB-UniRule"/>
</dbReference>
<dbReference type="GO" id="GO:0005975">
    <property type="term" value="P:carbohydrate metabolic process"/>
    <property type="evidence" value="ECO:0007669"/>
    <property type="project" value="InterPro"/>
</dbReference>
<dbReference type="GO" id="GO:0051301">
    <property type="term" value="P:cell division"/>
    <property type="evidence" value="ECO:0007669"/>
    <property type="project" value="UniProtKB-KW"/>
</dbReference>
<dbReference type="GO" id="GO:0071555">
    <property type="term" value="P:cell wall organization"/>
    <property type="evidence" value="ECO:0007669"/>
    <property type="project" value="UniProtKB-KW"/>
</dbReference>
<dbReference type="GO" id="GO:0030259">
    <property type="term" value="P:lipid glycosylation"/>
    <property type="evidence" value="ECO:0007669"/>
    <property type="project" value="UniProtKB-UniRule"/>
</dbReference>
<dbReference type="GO" id="GO:0009252">
    <property type="term" value="P:peptidoglycan biosynthetic process"/>
    <property type="evidence" value="ECO:0007669"/>
    <property type="project" value="UniProtKB-UniRule"/>
</dbReference>
<dbReference type="GO" id="GO:0008360">
    <property type="term" value="P:regulation of cell shape"/>
    <property type="evidence" value="ECO:0007669"/>
    <property type="project" value="UniProtKB-KW"/>
</dbReference>
<dbReference type="CDD" id="cd03785">
    <property type="entry name" value="GT28_MurG"/>
    <property type="match status" value="1"/>
</dbReference>
<dbReference type="Gene3D" id="3.40.50.2000">
    <property type="entry name" value="Glycogen Phosphorylase B"/>
    <property type="match status" value="2"/>
</dbReference>
<dbReference type="HAMAP" id="MF_00033">
    <property type="entry name" value="MurG"/>
    <property type="match status" value="1"/>
</dbReference>
<dbReference type="InterPro" id="IPR006009">
    <property type="entry name" value="GlcNAc_MurG"/>
</dbReference>
<dbReference type="InterPro" id="IPR007235">
    <property type="entry name" value="Glyco_trans_28_C"/>
</dbReference>
<dbReference type="InterPro" id="IPR004276">
    <property type="entry name" value="GlycoTrans_28_N"/>
</dbReference>
<dbReference type="PANTHER" id="PTHR21015:SF27">
    <property type="entry name" value="UDP-N-ACETYLGLUCOSAMINE--N-ACETYLMURAMYL-(PENTAPEPTIDE) PYROPHOSPHORYL-UNDECAPRENOL N-ACETYLGLUCOSAMINE TRANSFERASE"/>
    <property type="match status" value="1"/>
</dbReference>
<dbReference type="PANTHER" id="PTHR21015">
    <property type="entry name" value="UDP-N-ACETYLGLUCOSAMINE--N-ACETYLMURAMYL-(PENTAPEPTIDE) PYROPHOSPHORYL-UNDECAPRENOL N-ACETYLGLUCOSAMINE TRANSFERASE 1"/>
    <property type="match status" value="1"/>
</dbReference>
<dbReference type="Pfam" id="PF04101">
    <property type="entry name" value="Glyco_tran_28_C"/>
    <property type="match status" value="1"/>
</dbReference>
<dbReference type="Pfam" id="PF03033">
    <property type="entry name" value="Glyco_transf_28"/>
    <property type="match status" value="1"/>
</dbReference>
<dbReference type="SUPFAM" id="SSF53756">
    <property type="entry name" value="UDP-Glycosyltransferase/glycogen phosphorylase"/>
    <property type="match status" value="1"/>
</dbReference>
<gene>
    <name evidence="1" type="primary">murG</name>
    <name type="ordered locus">SAG0476</name>
</gene>
<organism>
    <name type="scientific">Streptococcus agalactiae serotype V (strain ATCC BAA-611 / 2603 V/R)</name>
    <dbReference type="NCBI Taxonomy" id="208435"/>
    <lineage>
        <taxon>Bacteria</taxon>
        <taxon>Bacillati</taxon>
        <taxon>Bacillota</taxon>
        <taxon>Bacilli</taxon>
        <taxon>Lactobacillales</taxon>
        <taxon>Streptococcaceae</taxon>
        <taxon>Streptococcus</taxon>
    </lineage>
</organism>
<accession>Q8CX15</accession>
<sequence>MGKKIVFTGGGTVGHVTLNLILIPKFIKDGWEVHYIGDKNGIEHEQINQSGLDITFHSIATGKLRRYFSWQNMLDVFKVGVGVLQSIAIIAKLRPQALFSKGGFVSVPPVVAARLLKVPVFVHESDLSMGLANKIAYKFATIMYTTFEQSKDLIKTKHIGAVTKVMDCKKSFENTDLTSIKEAFDPNLKTLLFIGGSAGAKVFNDFITQTPELEEKYNVINISGDSSLNRLKKNLYRVDYVTDLYQPLMNLADVVVTRGGSNTIFELVAMKKLHLIIPLGREASRGDQLENAAYFEEKGYALQLPESELNINTLEKQINLLISNSESYEKNMSQSSEIKSQDEFYQLLIDDMAKVTKG</sequence>